<accession>Q93409</accession>
<name>NLP8_CAEEL</name>
<keyword id="KW-0527">Neuropeptide</keyword>
<keyword id="KW-1185">Reference proteome</keyword>
<keyword id="KW-0964">Secreted</keyword>
<keyword id="KW-0732">Signal</keyword>
<organism evidence="6">
    <name type="scientific">Caenorhabditis elegans</name>
    <dbReference type="NCBI Taxonomy" id="6239"/>
    <lineage>
        <taxon>Eukaryota</taxon>
        <taxon>Metazoa</taxon>
        <taxon>Ecdysozoa</taxon>
        <taxon>Nematoda</taxon>
        <taxon>Chromadorea</taxon>
        <taxon>Rhabditida</taxon>
        <taxon>Rhabditina</taxon>
        <taxon>Rhabditomorpha</taxon>
        <taxon>Rhabditoidea</taxon>
        <taxon>Rhabditidae</taxon>
        <taxon>Peloderinae</taxon>
        <taxon>Caenorhabditis</taxon>
    </lineage>
</organism>
<proteinExistence type="evidence at protein level"/>
<protein>
    <recommendedName>
        <fullName evidence="7">Neuropeptide-like protein nlp-8</fullName>
    </recommendedName>
    <component>
        <recommendedName>
            <fullName evidence="5">AFDRMDNSDFFGA</fullName>
        </recommendedName>
    </component>
    <component>
        <recommendedName>
            <fullName evidence="5">SFDRMGGTEFGLM</fullName>
        </recommendedName>
    </component>
</protein>
<dbReference type="EMBL" id="BX284601">
    <property type="protein sequence ID" value="CAB02079.1"/>
    <property type="molecule type" value="Genomic_DNA"/>
</dbReference>
<dbReference type="PIR" id="T20329">
    <property type="entry name" value="T20329"/>
</dbReference>
<dbReference type="RefSeq" id="NP_492158.1">
    <property type="nucleotide sequence ID" value="NM_059757.8"/>
</dbReference>
<dbReference type="FunCoup" id="Q93409">
    <property type="interactions" value="1402"/>
</dbReference>
<dbReference type="STRING" id="6239.D2005.2.1"/>
<dbReference type="PaxDb" id="6239-D2005.2"/>
<dbReference type="EnsemblMetazoa" id="D2005.2.1">
    <property type="protein sequence ID" value="D2005.2.1"/>
    <property type="gene ID" value="WBGene00003746"/>
</dbReference>
<dbReference type="GeneID" id="172544"/>
<dbReference type="KEGG" id="cel:CELE_D2005.2"/>
<dbReference type="UCSC" id="D2005.2">
    <property type="organism name" value="c. elegans"/>
</dbReference>
<dbReference type="AGR" id="WB:WBGene00003746"/>
<dbReference type="CTD" id="172544"/>
<dbReference type="WormBase" id="D2005.2">
    <property type="protein sequence ID" value="CE09066"/>
    <property type="gene ID" value="WBGene00003746"/>
    <property type="gene designation" value="nlp-8"/>
</dbReference>
<dbReference type="eggNOG" id="ENOG502TGUI">
    <property type="taxonomic scope" value="Eukaryota"/>
</dbReference>
<dbReference type="HOGENOM" id="CLU_1571991_0_0_1"/>
<dbReference type="InParanoid" id="Q93409"/>
<dbReference type="OMA" id="YPYLIFP"/>
<dbReference type="OrthoDB" id="5850233at2759"/>
<dbReference type="PRO" id="PR:Q93409"/>
<dbReference type="Proteomes" id="UP000001940">
    <property type="component" value="Chromosome I"/>
</dbReference>
<dbReference type="Bgee" id="WBGene00003746">
    <property type="expression patterns" value="Expressed in larva and 3 other cell types or tissues"/>
</dbReference>
<dbReference type="GO" id="GO:0005576">
    <property type="term" value="C:extracellular region"/>
    <property type="evidence" value="ECO:0007669"/>
    <property type="project" value="UniProtKB-SubCell"/>
</dbReference>
<dbReference type="GO" id="GO:0007218">
    <property type="term" value="P:neuropeptide signaling pathway"/>
    <property type="evidence" value="ECO:0007669"/>
    <property type="project" value="UniProtKB-KW"/>
</dbReference>
<dbReference type="GO" id="GO:0030431">
    <property type="term" value="P:sleep"/>
    <property type="evidence" value="ECO:0000316"/>
    <property type="project" value="UniProtKB"/>
</dbReference>
<reference evidence="6" key="1">
    <citation type="journal article" date="1998" name="Science">
        <title>Genome sequence of the nematode C. elegans: a platform for investigating biology.</title>
        <authorList>
            <consortium name="The C. elegans sequencing consortium"/>
        </authorList>
    </citation>
    <scope>NUCLEOTIDE SEQUENCE [LARGE SCALE GENOMIC DNA]</scope>
    <source>
        <strain evidence="6">Bristol N2</strain>
    </source>
</reference>
<reference evidence="4" key="2">
    <citation type="journal article" date="2016" name="Curr. Biol.">
        <title>C. elegans Stress-Induced Sleep Emerges from the Collective Action of Multiple Neuropeptides.</title>
        <authorList>
            <person name="Nath R.D."/>
            <person name="Chow E.S."/>
            <person name="Wang H."/>
            <person name="Schwarz E.M."/>
            <person name="Sternberg P.W."/>
        </authorList>
    </citation>
    <scope>FUNCTION</scope>
    <scope>DEVELOPMENTAL STAGE</scope>
</reference>
<reference evidence="4" key="3">
    <citation type="journal article" date="2018" name="Neurochem. Res.">
        <title>Deciphering the Role of EGL-3 for Neuropeptides Processing in Caenorhabditis elegans Using High-Resolution Quadrupole-Orbitrap Mass Spectrometry.</title>
        <authorList>
            <person name="Salem J.B."/>
            <person name="Nkambeu B."/>
            <person name="Arvanitis D.N."/>
            <person name="Beaudry F."/>
        </authorList>
    </citation>
    <scope>FUNCTION</scope>
    <scope>PROTEOLYTIC CLEAVAGE</scope>
    <scope>MASS SPECTROMETRY</scope>
</reference>
<gene>
    <name evidence="7" type="primary">nlp-8</name>
    <name evidence="7" type="ORF">D2005.2</name>
</gene>
<evidence type="ECO:0000255" key="1"/>
<evidence type="ECO:0000269" key="2">
    <source>
    </source>
</evidence>
<evidence type="ECO:0000269" key="3">
    <source>
    </source>
</evidence>
<evidence type="ECO:0000305" key="4"/>
<evidence type="ECO:0000305" key="5">
    <source>
    </source>
</evidence>
<evidence type="ECO:0000312" key="6">
    <source>
        <dbReference type="Proteomes" id="UP000001940"/>
    </source>
</evidence>
<evidence type="ECO:0000312" key="7">
    <source>
        <dbReference type="WormBase" id="D2005.2"/>
    </source>
</evidence>
<comment type="function">
    <text evidence="2 3">Neuropeptide-like protein (PubMed:30229400). Plays a role in behaviors associated with a sleep-like state induced by stress (SIS), acting in concert with the FARP (FMRFamide related) peptides, flp-13 and flp-24 (PubMed:27546573).</text>
</comment>
<comment type="subcellular location">
    <subcellularLocation>
        <location evidence="4">Secreted</location>
    </subcellularLocation>
</comment>
<comment type="developmental stage">
    <text evidence="2">Expressed in the ALA neuron in L4 stage larvae.</text>
</comment>
<comment type="PTM">
    <text evidence="3">May be processed by convertase egl-3.</text>
</comment>
<comment type="mass spectrometry" mass="746.8" method="Electrospray" evidence="3">
    <molecule>AFDRMDNSDFFGA</molecule>
</comment>
<comment type="mass spectrometry" mass="724.3" method="Electrospray" evidence="3">
    <molecule>SFDRMGGTEFGLM</molecule>
</comment>
<sequence length="172" mass="19775">MSQKLLPISPLQLLFLQCLLIGFTAAYPYLIFPASPSSGDSRRLVKRAFDRFDNSGVFSFGAKRFDRYDDETAYGYGFDNHIFKRSADPYRFMSVPTKKAFDRMDNSDFFGAKRKRSFDRMGGTEFGLMKRSAPESREQLINNLAESIITLRRAREAESSPESQRTIITYDD</sequence>
<feature type="signal peptide" evidence="1">
    <location>
        <begin position="1"/>
        <end position="26"/>
    </location>
</feature>
<feature type="chain" id="PRO_0000454192" description="Neuropeptide-like protein nlp-8">
    <location>
        <begin position="27"/>
        <end position="172"/>
    </location>
</feature>
<feature type="peptide" id="PRO_0000454193" description="AFDRMDNSDFFGA" evidence="3">
    <location>
        <begin position="100"/>
        <end position="112"/>
    </location>
</feature>
<feature type="peptide" id="PRO_0000454194" description="SFDRMGGTEFGLM" evidence="3">
    <location>
        <begin position="117"/>
        <end position="129"/>
    </location>
</feature>